<gene>
    <name type="primary">ygfB</name>
    <name type="ordered locus">Z4246</name>
    <name type="ordered locus">ECs3780</name>
</gene>
<dbReference type="EMBL" id="AE005174">
    <property type="protein sequence ID" value="AAG58036.1"/>
    <property type="status" value="ALT_INIT"/>
    <property type="molecule type" value="Genomic_DNA"/>
</dbReference>
<dbReference type="EMBL" id="BA000007">
    <property type="protein sequence ID" value="BAB37203.2"/>
    <property type="molecule type" value="Genomic_DNA"/>
</dbReference>
<dbReference type="RefSeq" id="NP_311807.3">
    <property type="nucleotide sequence ID" value="NC_002695.1"/>
</dbReference>
<dbReference type="RefSeq" id="WP_001295378.1">
    <property type="nucleotide sequence ID" value="NZ_VOAI01000003.1"/>
</dbReference>
<dbReference type="SMR" id="P0A8C6"/>
<dbReference type="STRING" id="155864.Z4246"/>
<dbReference type="GeneID" id="916399"/>
<dbReference type="GeneID" id="93779092"/>
<dbReference type="KEGG" id="ece:Z4246"/>
<dbReference type="KEGG" id="ecs:ECs_3780"/>
<dbReference type="PATRIC" id="fig|386585.9.peg.3945"/>
<dbReference type="eggNOG" id="COG3079">
    <property type="taxonomic scope" value="Bacteria"/>
</dbReference>
<dbReference type="HOGENOM" id="CLU_085336_1_0_6"/>
<dbReference type="OMA" id="WVNHFIS"/>
<dbReference type="Proteomes" id="UP000000558">
    <property type="component" value="Chromosome"/>
</dbReference>
<dbReference type="Proteomes" id="UP000002519">
    <property type="component" value="Chromosome"/>
</dbReference>
<dbReference type="GO" id="GO:0005829">
    <property type="term" value="C:cytosol"/>
    <property type="evidence" value="ECO:0007669"/>
    <property type="project" value="TreeGrafter"/>
</dbReference>
<dbReference type="FunFam" id="1.20.120.740:FF:000001">
    <property type="entry name" value="UPF0149 protein YgfB"/>
    <property type="match status" value="1"/>
</dbReference>
<dbReference type="Gene3D" id="1.20.120.740">
    <property type="entry name" value="YgfB uncharacterised protein family UPF0149, PF03695"/>
    <property type="match status" value="1"/>
</dbReference>
<dbReference type="HAMAP" id="MF_00346">
    <property type="entry name" value="UPF0149"/>
    <property type="match status" value="1"/>
</dbReference>
<dbReference type="InterPro" id="IPR011978">
    <property type="entry name" value="YgfB-like"/>
</dbReference>
<dbReference type="InterPro" id="IPR036255">
    <property type="entry name" value="YgfB-like_sf"/>
</dbReference>
<dbReference type="NCBIfam" id="NF002477">
    <property type="entry name" value="PRK01736.1"/>
    <property type="match status" value="1"/>
</dbReference>
<dbReference type="NCBIfam" id="TIGR02292">
    <property type="entry name" value="ygfB_yecA"/>
    <property type="match status" value="1"/>
</dbReference>
<dbReference type="PANTHER" id="PTHR37528">
    <property type="entry name" value="UPF0149 PROTEIN YGFB"/>
    <property type="match status" value="1"/>
</dbReference>
<dbReference type="PANTHER" id="PTHR37528:SF1">
    <property type="entry name" value="UPF0149 PROTEIN YGFB"/>
    <property type="match status" value="1"/>
</dbReference>
<dbReference type="Pfam" id="PF03695">
    <property type="entry name" value="UPF0149"/>
    <property type="match status" value="1"/>
</dbReference>
<dbReference type="SUPFAM" id="SSF101327">
    <property type="entry name" value="YgfB-like"/>
    <property type="match status" value="1"/>
</dbReference>
<organism>
    <name type="scientific">Escherichia coli O157:H7</name>
    <dbReference type="NCBI Taxonomy" id="83334"/>
    <lineage>
        <taxon>Bacteria</taxon>
        <taxon>Pseudomonadati</taxon>
        <taxon>Pseudomonadota</taxon>
        <taxon>Gammaproteobacteria</taxon>
        <taxon>Enterobacterales</taxon>
        <taxon>Enterobacteriaceae</taxon>
        <taxon>Escherichia</taxon>
    </lineage>
</organism>
<name>YGFB_ECO57</name>
<accession>P0A8C6</accession>
<accession>P25533</accession>
<accession>Q8XD28</accession>
<reference key="1">
    <citation type="journal article" date="2001" name="Nature">
        <title>Genome sequence of enterohaemorrhagic Escherichia coli O157:H7.</title>
        <authorList>
            <person name="Perna N.T."/>
            <person name="Plunkett G. III"/>
            <person name="Burland V."/>
            <person name="Mau B."/>
            <person name="Glasner J.D."/>
            <person name="Rose D.J."/>
            <person name="Mayhew G.F."/>
            <person name="Evans P.S."/>
            <person name="Gregor J."/>
            <person name="Kirkpatrick H.A."/>
            <person name="Posfai G."/>
            <person name="Hackett J."/>
            <person name="Klink S."/>
            <person name="Boutin A."/>
            <person name="Shao Y."/>
            <person name="Miller L."/>
            <person name="Grotbeck E.J."/>
            <person name="Davis N.W."/>
            <person name="Lim A."/>
            <person name="Dimalanta E.T."/>
            <person name="Potamousis K."/>
            <person name="Apodaca J."/>
            <person name="Anantharaman T.S."/>
            <person name="Lin J."/>
            <person name="Yen G."/>
            <person name="Schwartz D.C."/>
            <person name="Welch R.A."/>
            <person name="Blattner F.R."/>
        </authorList>
    </citation>
    <scope>NUCLEOTIDE SEQUENCE [LARGE SCALE GENOMIC DNA]</scope>
    <source>
        <strain>O157:H7 / EDL933 / ATCC 700927 / EHEC</strain>
    </source>
</reference>
<reference key="2">
    <citation type="journal article" date="2001" name="DNA Res.">
        <title>Complete genome sequence of enterohemorrhagic Escherichia coli O157:H7 and genomic comparison with a laboratory strain K-12.</title>
        <authorList>
            <person name="Hayashi T."/>
            <person name="Makino K."/>
            <person name="Ohnishi M."/>
            <person name="Kurokawa K."/>
            <person name="Ishii K."/>
            <person name="Yokoyama K."/>
            <person name="Han C.-G."/>
            <person name="Ohtsubo E."/>
            <person name="Nakayama K."/>
            <person name="Murata T."/>
            <person name="Tanaka M."/>
            <person name="Tobe T."/>
            <person name="Iida T."/>
            <person name="Takami H."/>
            <person name="Honda T."/>
            <person name="Sasakawa C."/>
            <person name="Ogasawara N."/>
            <person name="Yasunaga T."/>
            <person name="Kuhara S."/>
            <person name="Shiba T."/>
            <person name="Hattori M."/>
            <person name="Shinagawa H."/>
        </authorList>
    </citation>
    <scope>NUCLEOTIDE SEQUENCE [LARGE SCALE GENOMIC DNA]</scope>
    <source>
        <strain>O157:H7 / Sakai / RIMD 0509952 / EHEC</strain>
    </source>
</reference>
<comment type="similarity">
    <text evidence="1">Belongs to the UPF0149 family.</text>
</comment>
<comment type="sequence caution" evidence="1">
    <conflict type="erroneous initiation">
        <sequence resource="EMBL-CDS" id="AAG58036"/>
    </conflict>
    <text>Extended N-terminus.</text>
</comment>
<sequence length="192" mass="21230">MSIQNEMPGYNEMNQYLNQQGTGLTPAEMHGLISGMICGGNDDSSWLPLLHDLTNEGMAFGHELAQALRKMHSATSDALQDDGFLFQLYLPDGDDVSVFDRADALAGWVNHFLLGLGVTQPKLDKVTGETGEAIDDLRNIAQLGYDEDEDQEELEMSLEEIIEYVRVAALLCHDTFTHPQPTAPEVQKPTLH</sequence>
<feature type="chain" id="PRO_0000207560" description="UPF0149 protein YgfB">
    <location>
        <begin position="1"/>
        <end position="192"/>
    </location>
</feature>
<proteinExistence type="inferred from homology"/>
<protein>
    <recommendedName>
        <fullName>UPF0149 protein YgfB</fullName>
    </recommendedName>
</protein>
<evidence type="ECO:0000305" key="1"/>
<keyword id="KW-1185">Reference proteome</keyword>